<accession>A6SX69</accession>
<comment type="function">
    <text evidence="1">May be involved in recombination.</text>
</comment>
<comment type="subcellular location">
    <subcellularLocation>
        <location evidence="1">Cytoplasm</location>
        <location evidence="1">Nucleoid</location>
    </subcellularLocation>
</comment>
<comment type="similarity">
    <text evidence="1">Belongs to the RdgC family.</text>
</comment>
<organism>
    <name type="scientific">Janthinobacterium sp. (strain Marseille)</name>
    <name type="common">Minibacterium massiliensis</name>
    <dbReference type="NCBI Taxonomy" id="375286"/>
    <lineage>
        <taxon>Bacteria</taxon>
        <taxon>Pseudomonadati</taxon>
        <taxon>Pseudomonadota</taxon>
        <taxon>Betaproteobacteria</taxon>
        <taxon>Burkholderiales</taxon>
        <taxon>Oxalobacteraceae</taxon>
        <taxon>Janthinobacterium</taxon>
    </lineage>
</organism>
<sequence length="300" mass="33625">MWFKNLQIYRLPAPWAVSAEQLAADLAPHAFQPCSSLEMQSQGWVSPRENGELVYSLNKQMLLLLGTEKKLLPTTVINQVTKIKAAEIEEQQGFKPGRKQMKEIKEEVTDDLLPRAFSVWRQTWVWIDPVNGWMVVDAGSPAKADEVIKLLVKSVDKLPLETLHVAQSPVTAMTEWLVADTAPHGFTVDQDTELRATGEGKATVRYVRHTLEADDVRRHIASGKQCTRLAMTWADKISFVLTESLTIKRVTPLDVIKENADSTAQNDEERFDSDIMLMTGELSRMLADLVAALGGEVEKK</sequence>
<proteinExistence type="inferred from homology"/>
<name>RDGC_JANMA</name>
<evidence type="ECO:0000255" key="1">
    <source>
        <dbReference type="HAMAP-Rule" id="MF_00194"/>
    </source>
</evidence>
<protein>
    <recommendedName>
        <fullName evidence="1">Recombination-associated protein RdgC</fullName>
    </recommendedName>
</protein>
<keyword id="KW-0963">Cytoplasm</keyword>
<keyword id="KW-0233">DNA recombination</keyword>
<dbReference type="EMBL" id="CP000269">
    <property type="protein sequence ID" value="ABR88430.1"/>
    <property type="molecule type" value="Genomic_DNA"/>
</dbReference>
<dbReference type="RefSeq" id="WP_012079033.1">
    <property type="nucleotide sequence ID" value="NC_009659.1"/>
</dbReference>
<dbReference type="SMR" id="A6SX69"/>
<dbReference type="STRING" id="375286.mma_1176"/>
<dbReference type="KEGG" id="mms:mma_1176"/>
<dbReference type="eggNOG" id="COG2974">
    <property type="taxonomic scope" value="Bacteria"/>
</dbReference>
<dbReference type="HOGENOM" id="CLU_052038_1_1_4"/>
<dbReference type="OrthoDB" id="5290530at2"/>
<dbReference type="Proteomes" id="UP000006388">
    <property type="component" value="Chromosome"/>
</dbReference>
<dbReference type="GO" id="GO:0043590">
    <property type="term" value="C:bacterial nucleoid"/>
    <property type="evidence" value="ECO:0007669"/>
    <property type="project" value="TreeGrafter"/>
</dbReference>
<dbReference type="GO" id="GO:0005737">
    <property type="term" value="C:cytoplasm"/>
    <property type="evidence" value="ECO:0007669"/>
    <property type="project" value="UniProtKB-UniRule"/>
</dbReference>
<dbReference type="GO" id="GO:0003690">
    <property type="term" value="F:double-stranded DNA binding"/>
    <property type="evidence" value="ECO:0007669"/>
    <property type="project" value="TreeGrafter"/>
</dbReference>
<dbReference type="GO" id="GO:0006310">
    <property type="term" value="P:DNA recombination"/>
    <property type="evidence" value="ECO:0007669"/>
    <property type="project" value="UniProtKB-UniRule"/>
</dbReference>
<dbReference type="GO" id="GO:0000018">
    <property type="term" value="P:regulation of DNA recombination"/>
    <property type="evidence" value="ECO:0007669"/>
    <property type="project" value="TreeGrafter"/>
</dbReference>
<dbReference type="HAMAP" id="MF_00194">
    <property type="entry name" value="RdgC"/>
    <property type="match status" value="1"/>
</dbReference>
<dbReference type="InterPro" id="IPR007476">
    <property type="entry name" value="RdgC"/>
</dbReference>
<dbReference type="NCBIfam" id="NF001463">
    <property type="entry name" value="PRK00321.1-4"/>
    <property type="match status" value="1"/>
</dbReference>
<dbReference type="NCBIfam" id="NF001464">
    <property type="entry name" value="PRK00321.1-5"/>
    <property type="match status" value="1"/>
</dbReference>
<dbReference type="PANTHER" id="PTHR38103">
    <property type="entry name" value="RECOMBINATION-ASSOCIATED PROTEIN RDGC"/>
    <property type="match status" value="1"/>
</dbReference>
<dbReference type="PANTHER" id="PTHR38103:SF1">
    <property type="entry name" value="RECOMBINATION-ASSOCIATED PROTEIN RDGC"/>
    <property type="match status" value="1"/>
</dbReference>
<dbReference type="Pfam" id="PF04381">
    <property type="entry name" value="RdgC"/>
    <property type="match status" value="1"/>
</dbReference>
<gene>
    <name evidence="1" type="primary">rdgC</name>
    <name type="ordered locus">mma_1176</name>
</gene>
<reference key="1">
    <citation type="journal article" date="2007" name="PLoS Genet.">
        <title>Genome analysis of Minibacterium massiliensis highlights the convergent evolution of water-living bacteria.</title>
        <authorList>
            <person name="Audic S."/>
            <person name="Robert C."/>
            <person name="Campagna B."/>
            <person name="Parinello H."/>
            <person name="Claverie J.-M."/>
            <person name="Raoult D."/>
            <person name="Drancourt M."/>
        </authorList>
    </citation>
    <scope>NUCLEOTIDE SEQUENCE [LARGE SCALE GENOMIC DNA]</scope>
    <source>
        <strain>Marseille</strain>
    </source>
</reference>
<feature type="chain" id="PRO_1000021210" description="Recombination-associated protein RdgC">
    <location>
        <begin position="1"/>
        <end position="300"/>
    </location>
</feature>